<reference key="1">
    <citation type="journal article" date="1999" name="J. Phycol.">
        <title>The atpA gene cluster of a cryptomonad, Guillardia theta: a piece in the puzzle of chloroplast genome development.</title>
        <authorList>
            <person name="Leitsch C.E.W."/>
            <person name="Kowallik K.V."/>
            <person name="Douglas S.E."/>
        </authorList>
    </citation>
    <scope>NUCLEOTIDE SEQUENCE [GENOMIC DNA]</scope>
</reference>
<reference key="2">
    <citation type="journal article" date="1999" name="J. Mol. Evol.">
        <title>The plastid genome of the cryptophyte alga, Guillardia theta: complete sequence and conserved synteny groups confirm its common ancestry with red algae.</title>
        <authorList>
            <person name="Douglas S.E."/>
            <person name="Penny S.L."/>
        </authorList>
    </citation>
    <scope>NUCLEOTIDE SEQUENCE [LARGE SCALE GENOMIC DNA]</scope>
</reference>
<dbReference type="EMBL" id="AF041468">
    <property type="protein sequence ID" value="AAC35668.1"/>
    <property type="molecule type" value="Genomic_DNA"/>
</dbReference>
<dbReference type="RefSeq" id="NP_050734.1">
    <property type="nucleotide sequence ID" value="NC_000926.1"/>
</dbReference>
<dbReference type="SMR" id="O78477"/>
<dbReference type="GeneID" id="857039"/>
<dbReference type="HOGENOM" id="CLU_079215_8_1_1"/>
<dbReference type="OMA" id="IRANIGM"/>
<dbReference type="GO" id="GO:0009535">
    <property type="term" value="C:chloroplast thylakoid membrane"/>
    <property type="evidence" value="ECO:0007669"/>
    <property type="project" value="UniProtKB-SubCell"/>
</dbReference>
<dbReference type="GO" id="GO:0045259">
    <property type="term" value="C:proton-transporting ATP synthase complex"/>
    <property type="evidence" value="ECO:0007669"/>
    <property type="project" value="UniProtKB-KW"/>
</dbReference>
<dbReference type="GO" id="GO:0005524">
    <property type="term" value="F:ATP binding"/>
    <property type="evidence" value="ECO:0007669"/>
    <property type="project" value="UniProtKB-KW"/>
</dbReference>
<dbReference type="GO" id="GO:0046933">
    <property type="term" value="F:proton-transporting ATP synthase activity, rotational mechanism"/>
    <property type="evidence" value="ECO:0007669"/>
    <property type="project" value="UniProtKB-UniRule"/>
</dbReference>
<dbReference type="CDD" id="cd06503">
    <property type="entry name" value="ATP-synt_Fo_b"/>
    <property type="match status" value="1"/>
</dbReference>
<dbReference type="HAMAP" id="MF_01398">
    <property type="entry name" value="ATP_synth_b_bprime"/>
    <property type="match status" value="1"/>
</dbReference>
<dbReference type="InterPro" id="IPR002146">
    <property type="entry name" value="ATP_synth_b/b'su_bac/chlpt"/>
</dbReference>
<dbReference type="PANTHER" id="PTHR34264">
    <property type="entry name" value="ATP SYNTHASE SUBUNIT B, CHLOROPLASTIC"/>
    <property type="match status" value="1"/>
</dbReference>
<dbReference type="PANTHER" id="PTHR34264:SF3">
    <property type="entry name" value="ATP SYNTHASE SUBUNIT B, CHLOROPLASTIC"/>
    <property type="match status" value="1"/>
</dbReference>
<dbReference type="Pfam" id="PF00430">
    <property type="entry name" value="ATP-synt_B"/>
    <property type="match status" value="1"/>
</dbReference>
<name>ATPF_GUITH</name>
<protein>
    <recommendedName>
        <fullName evidence="1">ATP synthase subunit b, chloroplastic</fullName>
    </recommendedName>
    <alternativeName>
        <fullName evidence="1">ATP synthase F(0) sector subunit b</fullName>
    </alternativeName>
    <alternativeName>
        <fullName evidence="1">ATPase subunit I</fullName>
    </alternativeName>
</protein>
<keyword id="KW-0066">ATP synthesis</keyword>
<keyword id="KW-0067">ATP-binding</keyword>
<keyword id="KW-0138">CF(0)</keyword>
<keyword id="KW-0150">Chloroplast</keyword>
<keyword id="KW-0375">Hydrogen ion transport</keyword>
<keyword id="KW-0406">Ion transport</keyword>
<keyword id="KW-0472">Membrane</keyword>
<keyword id="KW-0547">Nucleotide-binding</keyword>
<keyword id="KW-0934">Plastid</keyword>
<keyword id="KW-0793">Thylakoid</keyword>
<keyword id="KW-0812">Transmembrane</keyword>
<keyword id="KW-1133">Transmembrane helix</keyword>
<keyword id="KW-0813">Transport</keyword>
<evidence type="ECO:0000255" key="1">
    <source>
        <dbReference type="HAMAP-Rule" id="MF_01398"/>
    </source>
</evidence>
<feature type="chain" id="PRO_0000082409" description="ATP synthase subunit b, chloroplastic">
    <location>
        <begin position="1"/>
        <end position="182"/>
    </location>
</feature>
<feature type="transmembrane region" description="Helical" evidence="1">
    <location>
        <begin position="33"/>
        <end position="51"/>
    </location>
</feature>
<gene>
    <name evidence="1" type="primary">atpF</name>
</gene>
<accession>O78477</accession>
<proteinExistence type="inferred from homology"/>
<sequence>MDIISGFYNTINLAELSNAKTFGFNPNILEANVLNIAILLSGVIYLGRNFLTSALESRQQKVTEAIQEAEERLQQANVKLLDAEKQLTQAQTVIEQIKKEAEKTARTVKETILAQGKLDIERLTNNGKSSIEKAELQIKKQIQQHITDLAIKKVSAQMETFMTDNLQVKVIDTNIASLGGKI</sequence>
<organism>
    <name type="scientific">Guillardia theta</name>
    <name type="common">Cryptophyte</name>
    <name type="synonym">Cryptomonas phi</name>
    <dbReference type="NCBI Taxonomy" id="55529"/>
    <lineage>
        <taxon>Eukaryota</taxon>
        <taxon>Cryptophyceae</taxon>
        <taxon>Pyrenomonadales</taxon>
        <taxon>Geminigeraceae</taxon>
        <taxon>Guillardia</taxon>
    </lineage>
</organism>
<comment type="function">
    <text evidence="1">F(1)F(0) ATP synthase produces ATP from ADP in the presence of a proton or sodium gradient. F-type ATPases consist of two structural domains, F(1) containing the extramembraneous catalytic core and F(0) containing the membrane proton channel, linked together by a central stalk and a peripheral stalk. During catalysis, ATP synthesis in the catalytic domain of F(1) is coupled via a rotary mechanism of the central stalk subunits to proton translocation.</text>
</comment>
<comment type="function">
    <text evidence="1">Component of the F(0) channel, it forms part of the peripheral stalk, linking F(1) to F(0).</text>
</comment>
<comment type="subunit">
    <text evidence="1">F-type ATPases have 2 components, F(1) - the catalytic core - and F(0) - the membrane proton channel. F(1) has five subunits: alpha(3), beta(3), gamma(1), delta(1), epsilon(1). F(0) has four main subunits: a(1), b(1), b'(1) and c(10-14). The alpha and beta chains form an alternating ring which encloses part of the gamma chain. F(1) is attached to F(0) by a central stalk formed by the gamma and epsilon chains, while a peripheral stalk is formed by the delta, b and b' chains.</text>
</comment>
<comment type="subcellular location">
    <subcellularLocation>
        <location evidence="1">Plastid</location>
        <location evidence="1">Chloroplast thylakoid membrane</location>
        <topology evidence="1">Single-pass membrane protein</topology>
    </subcellularLocation>
</comment>
<comment type="miscellaneous">
    <text>In plastids the F-type ATPase is also known as CF(1)CF(0).</text>
</comment>
<comment type="similarity">
    <text evidence="1">Belongs to the ATPase B chain family.</text>
</comment>
<geneLocation type="chloroplast"/>